<name>HIS1_LEPIC</name>
<keyword id="KW-0028">Amino-acid biosynthesis</keyword>
<keyword id="KW-0067">ATP-binding</keyword>
<keyword id="KW-0963">Cytoplasm</keyword>
<keyword id="KW-0328">Glycosyltransferase</keyword>
<keyword id="KW-0368">Histidine biosynthesis</keyword>
<keyword id="KW-0547">Nucleotide-binding</keyword>
<keyword id="KW-0808">Transferase</keyword>
<dbReference type="EC" id="2.4.2.17" evidence="1"/>
<dbReference type="EMBL" id="AE016823">
    <property type="protein sequence ID" value="AAS71012.1"/>
    <property type="molecule type" value="Genomic_DNA"/>
</dbReference>
<dbReference type="SMR" id="P62382"/>
<dbReference type="KEGG" id="lic:LIC_12445"/>
<dbReference type="HOGENOM" id="CLU_038115_2_0_12"/>
<dbReference type="UniPathway" id="UPA00031">
    <property type="reaction ID" value="UER00006"/>
</dbReference>
<dbReference type="Proteomes" id="UP000007037">
    <property type="component" value="Chromosome I"/>
</dbReference>
<dbReference type="GO" id="GO:0005737">
    <property type="term" value="C:cytoplasm"/>
    <property type="evidence" value="ECO:0007669"/>
    <property type="project" value="UniProtKB-SubCell"/>
</dbReference>
<dbReference type="GO" id="GO:0005524">
    <property type="term" value="F:ATP binding"/>
    <property type="evidence" value="ECO:0007669"/>
    <property type="project" value="UniProtKB-KW"/>
</dbReference>
<dbReference type="GO" id="GO:0003879">
    <property type="term" value="F:ATP phosphoribosyltransferase activity"/>
    <property type="evidence" value="ECO:0007669"/>
    <property type="project" value="UniProtKB-UniRule"/>
</dbReference>
<dbReference type="GO" id="GO:0000105">
    <property type="term" value="P:L-histidine biosynthetic process"/>
    <property type="evidence" value="ECO:0007669"/>
    <property type="project" value="UniProtKB-UniRule"/>
</dbReference>
<dbReference type="CDD" id="cd13595">
    <property type="entry name" value="PBP2_HisGs"/>
    <property type="match status" value="1"/>
</dbReference>
<dbReference type="FunFam" id="3.40.190.10:FF:000008">
    <property type="entry name" value="ATP phosphoribosyltransferase"/>
    <property type="match status" value="1"/>
</dbReference>
<dbReference type="Gene3D" id="3.40.190.10">
    <property type="entry name" value="Periplasmic binding protein-like II"/>
    <property type="match status" value="2"/>
</dbReference>
<dbReference type="HAMAP" id="MF_01018">
    <property type="entry name" value="HisG_Short"/>
    <property type="match status" value="1"/>
</dbReference>
<dbReference type="InterPro" id="IPR013820">
    <property type="entry name" value="ATP_PRibTrfase_cat"/>
</dbReference>
<dbReference type="InterPro" id="IPR018198">
    <property type="entry name" value="ATP_PRibTrfase_CS"/>
</dbReference>
<dbReference type="InterPro" id="IPR001348">
    <property type="entry name" value="ATP_PRibTrfase_HisG"/>
</dbReference>
<dbReference type="InterPro" id="IPR024893">
    <property type="entry name" value="ATP_PRibTrfase_HisG_short"/>
</dbReference>
<dbReference type="NCBIfam" id="TIGR00070">
    <property type="entry name" value="hisG"/>
    <property type="match status" value="1"/>
</dbReference>
<dbReference type="PANTHER" id="PTHR21403:SF8">
    <property type="entry name" value="ATP PHOSPHORIBOSYLTRANSFERASE"/>
    <property type="match status" value="1"/>
</dbReference>
<dbReference type="PANTHER" id="PTHR21403">
    <property type="entry name" value="ATP PHOSPHORIBOSYLTRANSFERASE ATP-PRTASE"/>
    <property type="match status" value="1"/>
</dbReference>
<dbReference type="Pfam" id="PF01634">
    <property type="entry name" value="HisG"/>
    <property type="match status" value="1"/>
</dbReference>
<dbReference type="SUPFAM" id="SSF53850">
    <property type="entry name" value="Periplasmic binding protein-like II"/>
    <property type="match status" value="1"/>
</dbReference>
<dbReference type="PROSITE" id="PS01316">
    <property type="entry name" value="ATP_P_PHORIBOSYLTR"/>
    <property type="match status" value="1"/>
</dbReference>
<evidence type="ECO:0000255" key="1">
    <source>
        <dbReference type="HAMAP-Rule" id="MF_01018"/>
    </source>
</evidence>
<sequence length="206" mass="22666">MMLTLALPKGRLAEESIDLMISKGWLSSKPDPNSKELIYNDPKGKIRILLVRSQDVATYVEQCAADAGISGWDVLKEGGYDLATPLDLKIGKCRLSLAAPNGFTLEAHHRKIRVATKYPNLAREFFFLKGLSCEIFKLYGSIELAPLVGLSDCIVDLVSTGGTLKANGLKELDIILESSARLVFNRSSLYGKRKEAVEFMDSLSKI</sequence>
<organism>
    <name type="scientific">Leptospira interrogans serogroup Icterohaemorrhagiae serovar copenhageni (strain Fiocruz L1-130)</name>
    <dbReference type="NCBI Taxonomy" id="267671"/>
    <lineage>
        <taxon>Bacteria</taxon>
        <taxon>Pseudomonadati</taxon>
        <taxon>Spirochaetota</taxon>
        <taxon>Spirochaetia</taxon>
        <taxon>Leptospirales</taxon>
        <taxon>Leptospiraceae</taxon>
        <taxon>Leptospira</taxon>
    </lineage>
</organism>
<accession>P62382</accession>
<proteinExistence type="inferred from homology"/>
<protein>
    <recommendedName>
        <fullName evidence="1">ATP phosphoribosyltransferase</fullName>
        <shortName evidence="1">ATP-PRT</shortName>
        <shortName evidence="1">ATP-PRTase</shortName>
        <ecNumber evidence="1">2.4.2.17</ecNumber>
    </recommendedName>
</protein>
<feature type="chain" id="PRO_0000151913" description="ATP phosphoribosyltransferase">
    <location>
        <begin position="1"/>
        <end position="206"/>
    </location>
</feature>
<reference key="1">
    <citation type="journal article" date="2004" name="J. Bacteriol.">
        <title>Comparative genomics of two Leptospira interrogans serovars reveals novel insights into physiology and pathogenesis.</title>
        <authorList>
            <person name="Nascimento A.L.T.O."/>
            <person name="Ko A.I."/>
            <person name="Martins E.A.L."/>
            <person name="Monteiro-Vitorello C.B."/>
            <person name="Ho P.L."/>
            <person name="Haake D.A."/>
            <person name="Verjovski-Almeida S."/>
            <person name="Hartskeerl R.A."/>
            <person name="Marques M.V."/>
            <person name="Oliveira M.C."/>
            <person name="Menck C.F.M."/>
            <person name="Leite L.C.C."/>
            <person name="Carrer H."/>
            <person name="Coutinho L.L."/>
            <person name="Degrave W.M."/>
            <person name="Dellagostin O.A."/>
            <person name="El-Dorry H."/>
            <person name="Ferro E.S."/>
            <person name="Ferro M.I.T."/>
            <person name="Furlan L.R."/>
            <person name="Gamberini M."/>
            <person name="Giglioti E.A."/>
            <person name="Goes-Neto A."/>
            <person name="Goldman G.H."/>
            <person name="Goldman M.H.S."/>
            <person name="Harakava R."/>
            <person name="Jeronimo S.M.B."/>
            <person name="Junqueira-de-Azevedo I.L.M."/>
            <person name="Kimura E.T."/>
            <person name="Kuramae E.E."/>
            <person name="Lemos E.G.M."/>
            <person name="Lemos M.V.F."/>
            <person name="Marino C.L."/>
            <person name="Nunes L.R."/>
            <person name="de Oliveira R.C."/>
            <person name="Pereira G.G."/>
            <person name="Reis M.S."/>
            <person name="Schriefer A."/>
            <person name="Siqueira W.J."/>
            <person name="Sommer P."/>
            <person name="Tsai S.M."/>
            <person name="Simpson A.J.G."/>
            <person name="Ferro J.A."/>
            <person name="Camargo L.E.A."/>
            <person name="Kitajima J.P."/>
            <person name="Setubal J.C."/>
            <person name="Van Sluys M.A."/>
        </authorList>
    </citation>
    <scope>NUCLEOTIDE SEQUENCE [LARGE SCALE GENOMIC DNA]</scope>
    <source>
        <strain>Fiocruz L1-130</strain>
    </source>
</reference>
<comment type="function">
    <text evidence="1">Catalyzes the condensation of ATP and 5-phosphoribose 1-diphosphate to form N'-(5'-phosphoribosyl)-ATP (PR-ATP). Has a crucial role in the pathway because the rate of histidine biosynthesis seems to be controlled primarily by regulation of HisG enzymatic activity.</text>
</comment>
<comment type="catalytic activity">
    <reaction evidence="1">
        <text>1-(5-phospho-beta-D-ribosyl)-ATP + diphosphate = 5-phospho-alpha-D-ribose 1-diphosphate + ATP</text>
        <dbReference type="Rhea" id="RHEA:18473"/>
        <dbReference type="ChEBI" id="CHEBI:30616"/>
        <dbReference type="ChEBI" id="CHEBI:33019"/>
        <dbReference type="ChEBI" id="CHEBI:58017"/>
        <dbReference type="ChEBI" id="CHEBI:73183"/>
        <dbReference type="EC" id="2.4.2.17"/>
    </reaction>
</comment>
<comment type="pathway">
    <text evidence="1">Amino-acid biosynthesis; L-histidine biosynthesis; L-histidine from 5-phospho-alpha-D-ribose 1-diphosphate: step 1/9.</text>
</comment>
<comment type="subunit">
    <text evidence="1">Heteromultimer composed of HisG and HisZ subunits.</text>
</comment>
<comment type="subcellular location">
    <subcellularLocation>
        <location evidence="1">Cytoplasm</location>
    </subcellularLocation>
</comment>
<comment type="domain">
    <text>Lacks the C-terminal regulatory region which is replaced by HisZ.</text>
</comment>
<comment type="similarity">
    <text evidence="1">Belongs to the ATP phosphoribosyltransferase family. Short subfamily.</text>
</comment>
<gene>
    <name evidence="1" type="primary">hisG</name>
    <name type="ordered locus">LIC_12445</name>
</gene>